<organism>
    <name type="scientific">Beijerinckia indica subsp. indica (strain ATCC 9039 / DSM 1715 / NCIMB 8712)</name>
    <dbReference type="NCBI Taxonomy" id="395963"/>
    <lineage>
        <taxon>Bacteria</taxon>
        <taxon>Pseudomonadati</taxon>
        <taxon>Pseudomonadota</taxon>
        <taxon>Alphaproteobacteria</taxon>
        <taxon>Hyphomicrobiales</taxon>
        <taxon>Beijerinckiaceae</taxon>
        <taxon>Beijerinckia</taxon>
    </lineage>
</organism>
<sequence>MIIGFGNDLCDIRRIEESLARFGERFIARCFTDIERRKSEGRPSRAASYAKRFAAKEACAKALGTGLTQGVFWRDMGVVNLPSGKPTLALTGGAAERLALLTPPGLTAIIHLTLTDEFPLAQAQVIIEAVASEASFRPMT</sequence>
<gene>
    <name evidence="1" type="primary">acpS</name>
    <name type="ordered locus">Bind_2443</name>
</gene>
<name>ACPS_BEII9</name>
<reference key="1">
    <citation type="journal article" date="2010" name="J. Bacteriol.">
        <title>Complete genome sequence of Beijerinckia indica subsp. indica.</title>
        <authorList>
            <person name="Tamas I."/>
            <person name="Dedysh S.N."/>
            <person name="Liesack W."/>
            <person name="Stott M.B."/>
            <person name="Alam M."/>
            <person name="Murrell J.C."/>
            <person name="Dunfield P.F."/>
        </authorList>
    </citation>
    <scope>NUCLEOTIDE SEQUENCE [LARGE SCALE GENOMIC DNA]</scope>
    <source>
        <strain>ATCC 9039 / DSM 1715 / NCIMB 8712</strain>
    </source>
</reference>
<dbReference type="EC" id="2.7.8.7" evidence="1"/>
<dbReference type="EMBL" id="CP001016">
    <property type="protein sequence ID" value="ACB96052.1"/>
    <property type="molecule type" value="Genomic_DNA"/>
</dbReference>
<dbReference type="RefSeq" id="WP_012385405.1">
    <property type="nucleotide sequence ID" value="NC_010581.1"/>
</dbReference>
<dbReference type="SMR" id="B2II98"/>
<dbReference type="STRING" id="395963.Bind_2443"/>
<dbReference type="KEGG" id="bid:Bind_2443"/>
<dbReference type="eggNOG" id="COG0736">
    <property type="taxonomic scope" value="Bacteria"/>
</dbReference>
<dbReference type="HOGENOM" id="CLU_089696_0_2_5"/>
<dbReference type="OrthoDB" id="517356at2"/>
<dbReference type="Proteomes" id="UP000001695">
    <property type="component" value="Chromosome"/>
</dbReference>
<dbReference type="GO" id="GO:0005737">
    <property type="term" value="C:cytoplasm"/>
    <property type="evidence" value="ECO:0007669"/>
    <property type="project" value="UniProtKB-SubCell"/>
</dbReference>
<dbReference type="GO" id="GO:0008897">
    <property type="term" value="F:holo-[acyl-carrier-protein] synthase activity"/>
    <property type="evidence" value="ECO:0007669"/>
    <property type="project" value="UniProtKB-UniRule"/>
</dbReference>
<dbReference type="GO" id="GO:0000287">
    <property type="term" value="F:magnesium ion binding"/>
    <property type="evidence" value="ECO:0007669"/>
    <property type="project" value="UniProtKB-UniRule"/>
</dbReference>
<dbReference type="GO" id="GO:0006633">
    <property type="term" value="P:fatty acid biosynthetic process"/>
    <property type="evidence" value="ECO:0007669"/>
    <property type="project" value="UniProtKB-UniRule"/>
</dbReference>
<dbReference type="Gene3D" id="3.90.470.20">
    <property type="entry name" value="4'-phosphopantetheinyl transferase domain"/>
    <property type="match status" value="1"/>
</dbReference>
<dbReference type="HAMAP" id="MF_00101">
    <property type="entry name" value="AcpS"/>
    <property type="match status" value="1"/>
</dbReference>
<dbReference type="InterPro" id="IPR008278">
    <property type="entry name" value="4-PPantetheinyl_Trfase_dom"/>
</dbReference>
<dbReference type="InterPro" id="IPR037143">
    <property type="entry name" value="4-PPantetheinyl_Trfase_dom_sf"/>
</dbReference>
<dbReference type="InterPro" id="IPR002582">
    <property type="entry name" value="ACPS"/>
</dbReference>
<dbReference type="InterPro" id="IPR004568">
    <property type="entry name" value="Ppantetheine-prot_Trfase_dom"/>
</dbReference>
<dbReference type="NCBIfam" id="TIGR00516">
    <property type="entry name" value="acpS"/>
    <property type="match status" value="1"/>
</dbReference>
<dbReference type="NCBIfam" id="TIGR00556">
    <property type="entry name" value="pantethn_trn"/>
    <property type="match status" value="1"/>
</dbReference>
<dbReference type="Pfam" id="PF01648">
    <property type="entry name" value="ACPS"/>
    <property type="match status" value="1"/>
</dbReference>
<dbReference type="SUPFAM" id="SSF56214">
    <property type="entry name" value="4'-phosphopantetheinyl transferase"/>
    <property type="match status" value="1"/>
</dbReference>
<comment type="function">
    <text evidence="1">Transfers the 4'-phosphopantetheine moiety from coenzyme A to a Ser of acyl-carrier-protein.</text>
</comment>
<comment type="catalytic activity">
    <reaction evidence="1">
        <text>apo-[ACP] + CoA = holo-[ACP] + adenosine 3',5'-bisphosphate + H(+)</text>
        <dbReference type="Rhea" id="RHEA:12068"/>
        <dbReference type="Rhea" id="RHEA-COMP:9685"/>
        <dbReference type="Rhea" id="RHEA-COMP:9690"/>
        <dbReference type="ChEBI" id="CHEBI:15378"/>
        <dbReference type="ChEBI" id="CHEBI:29999"/>
        <dbReference type="ChEBI" id="CHEBI:57287"/>
        <dbReference type="ChEBI" id="CHEBI:58343"/>
        <dbReference type="ChEBI" id="CHEBI:64479"/>
        <dbReference type="EC" id="2.7.8.7"/>
    </reaction>
</comment>
<comment type="cofactor">
    <cofactor evidence="1">
        <name>Mg(2+)</name>
        <dbReference type="ChEBI" id="CHEBI:18420"/>
    </cofactor>
</comment>
<comment type="subcellular location">
    <subcellularLocation>
        <location evidence="1">Cytoplasm</location>
    </subcellularLocation>
</comment>
<comment type="similarity">
    <text evidence="1">Belongs to the P-Pant transferase superfamily. AcpS family.</text>
</comment>
<evidence type="ECO:0000255" key="1">
    <source>
        <dbReference type="HAMAP-Rule" id="MF_00101"/>
    </source>
</evidence>
<protein>
    <recommendedName>
        <fullName evidence="1">Holo-[acyl-carrier-protein] synthase</fullName>
        <shortName evidence="1">Holo-ACP synthase</shortName>
        <ecNumber evidence="1">2.7.8.7</ecNumber>
    </recommendedName>
    <alternativeName>
        <fullName evidence="1">4'-phosphopantetheinyl transferase AcpS</fullName>
    </alternativeName>
</protein>
<feature type="chain" id="PRO_1000093855" description="Holo-[acyl-carrier-protein] synthase">
    <location>
        <begin position="1"/>
        <end position="140"/>
    </location>
</feature>
<feature type="binding site" evidence="1">
    <location>
        <position position="8"/>
    </location>
    <ligand>
        <name>Mg(2+)</name>
        <dbReference type="ChEBI" id="CHEBI:18420"/>
    </ligand>
</feature>
<feature type="binding site" evidence="1">
    <location>
        <position position="57"/>
    </location>
    <ligand>
        <name>Mg(2+)</name>
        <dbReference type="ChEBI" id="CHEBI:18420"/>
    </ligand>
</feature>
<accession>B2II98</accession>
<proteinExistence type="inferred from homology"/>
<keyword id="KW-0963">Cytoplasm</keyword>
<keyword id="KW-0275">Fatty acid biosynthesis</keyword>
<keyword id="KW-0276">Fatty acid metabolism</keyword>
<keyword id="KW-0444">Lipid biosynthesis</keyword>
<keyword id="KW-0443">Lipid metabolism</keyword>
<keyword id="KW-0460">Magnesium</keyword>
<keyword id="KW-0479">Metal-binding</keyword>
<keyword id="KW-1185">Reference proteome</keyword>
<keyword id="KW-0808">Transferase</keyword>